<name>DDAG_ENTAG</name>
<comment type="function">
    <text evidence="1">Involved in dapdiamide antibiotics biosynthesis. Ligates fumarate and 2,3-diaminopropionate (DAP) to form N-beta-fumaroyl-DAP. Can also form N-succinoyl-DAP from succinate and DAP, with lower efficiency.</text>
</comment>
<comment type="catalytic activity">
    <reaction evidence="1">
        <text>(S)-2,3-diaminopropanoate + fumarate + ATP = N(3)-fumaroyl-(S)-2,3-diaminopropanoate + AMP + diphosphate</text>
        <dbReference type="Rhea" id="RHEA:44340"/>
        <dbReference type="ChEBI" id="CHEBI:29806"/>
        <dbReference type="ChEBI" id="CHEBI:30616"/>
        <dbReference type="ChEBI" id="CHEBI:33019"/>
        <dbReference type="ChEBI" id="CHEBI:57721"/>
        <dbReference type="ChEBI" id="CHEBI:84330"/>
        <dbReference type="ChEBI" id="CHEBI:456215"/>
        <dbReference type="EC" id="6.3.2.46"/>
    </reaction>
</comment>
<comment type="biophysicochemical properties">
    <kinetics>
        <KM evidence="1">0.55 mM for fumarate</KM>
        <KM evidence="1">20 mM for succinate</KM>
        <text evidence="1">kcat is 11.6 sec(-1) with fumarate as substrate. kcat is 3.8 sec(-1) with succinate as substrate.</text>
    </kinetics>
</comment>
<comment type="pathway">
    <text evidence="1">Antibiotic biosynthesis.</text>
</comment>
<reference key="1">
    <citation type="journal article" date="2010" name="J. Am. Chem. Soc.">
        <title>The nonribosomal peptide synthetase enzyme DdaD tethers N(beta)-fumaramoyl-l-2,3-diaminopropionate for Fe(II)/alpha-ketoglutarate-dependent epoxidation by DdaC during dapdiamide antibiotic biosynthesis.</title>
        <authorList>
            <person name="Hollenhorst M.A."/>
            <person name="Bumpus S.B."/>
            <person name="Matthews M.L."/>
            <person name="Bollinger J.M. Jr."/>
            <person name="Kelleher N.L."/>
            <person name="Walsh C.T."/>
        </authorList>
    </citation>
    <scope>NUCLEOTIDE SEQUENCE [GENOMIC DNA]</scope>
    <source>
        <strain>CU0119</strain>
    </source>
</reference>
<reference key="2">
    <citation type="journal article" date="2009" name="Biochemistry">
        <title>The ATP-dependent amide ligases DdaG and DdaF assemble the fumaramoyl-dipeptide scaffold of the dapdiamide antibiotics.</title>
        <authorList>
            <person name="Hollenhorst M.A."/>
            <person name="Clardy J."/>
            <person name="Walsh C.T."/>
        </authorList>
    </citation>
    <scope>FUNCTION</scope>
    <scope>CATALYTIC ACTIVITY</scope>
    <scope>BIOPHYSICOCHEMICAL PROPERTIES</scope>
    <scope>PATHWAY</scope>
    <source>
        <strain>CU0119</strain>
    </source>
</reference>
<gene>
    <name evidence="2" type="primary">ddaG</name>
</gene>
<feature type="chain" id="PRO_0000434793" description="Fumarate--(S)-2,3-diaminopropanoate ligase">
    <location>
        <begin position="1"/>
        <end position="396"/>
    </location>
</feature>
<accession>E2JA32</accession>
<evidence type="ECO:0000269" key="1">
    <source>
    </source>
</evidence>
<evidence type="ECO:0000303" key="2">
    <source>
    </source>
</evidence>
<evidence type="ECO:0000305" key="3"/>
<proteinExistence type="evidence at protein level"/>
<dbReference type="EC" id="6.3.2.46" evidence="1"/>
<dbReference type="EMBL" id="HQ130277">
    <property type="protein sequence ID" value="ADN39487.1"/>
    <property type="molecule type" value="Genomic_DNA"/>
</dbReference>
<dbReference type="SMR" id="E2JA32"/>
<dbReference type="KEGG" id="ag:ADN39487"/>
<dbReference type="BioCyc" id="MetaCyc:MONOMER-19475"/>
<dbReference type="BRENDA" id="6.3.2.46">
    <property type="organism ID" value="2084"/>
</dbReference>
<dbReference type="GO" id="GO:0016874">
    <property type="term" value="F:ligase activity"/>
    <property type="evidence" value="ECO:0007669"/>
    <property type="project" value="UniProtKB-KW"/>
</dbReference>
<dbReference type="GO" id="GO:0017000">
    <property type="term" value="P:antibiotic biosynthetic process"/>
    <property type="evidence" value="ECO:0007669"/>
    <property type="project" value="UniProtKB-KW"/>
</dbReference>
<dbReference type="Gene3D" id="3.40.50.12780">
    <property type="entry name" value="N-terminal domain of ligase-like"/>
    <property type="match status" value="1"/>
</dbReference>
<dbReference type="InterPro" id="IPR042099">
    <property type="entry name" value="ANL_N_sf"/>
</dbReference>
<dbReference type="InterPro" id="IPR053158">
    <property type="entry name" value="CapK_Type1_Caps_Biosynth"/>
</dbReference>
<dbReference type="InterPro" id="IPR048223">
    <property type="entry name" value="DdaG_Ligase"/>
</dbReference>
<dbReference type="NCBIfam" id="NF041596">
    <property type="entry name" value="fum_diaprop_lig_DdaG"/>
    <property type="match status" value="1"/>
</dbReference>
<dbReference type="PANTHER" id="PTHR36932">
    <property type="entry name" value="CAPSULAR POLYSACCHARIDE BIOSYNTHESIS PROTEIN"/>
    <property type="match status" value="1"/>
</dbReference>
<dbReference type="PANTHER" id="PTHR36932:SF1">
    <property type="entry name" value="CAPSULAR POLYSACCHARIDE BIOSYNTHESIS PROTEIN"/>
    <property type="match status" value="1"/>
</dbReference>
<dbReference type="SUPFAM" id="SSF56801">
    <property type="entry name" value="Acetyl-CoA synthetase-like"/>
    <property type="match status" value="1"/>
</dbReference>
<sequence length="396" mass="44753">MNKGENMNLEMWVQNISATFPWYAQLLRDKQADLSRLESLPLITEELLTQHYYHAENSFPGEHHSYLTSGTTSGKRKRIFYSDNDQRIYLQQRMDIIRDFCGEGHTRACADLGTGHAAATAGEIFQAMGCDVELIDFTRPIEQHIEVLNRFKPDIFFTMPMILDSLIATGKLDFQPKRIILLGDVASLNWQNKVADYFHIQPAQVLDLFGSIEIGSIAFYNHAQKRYQFDSYVRPEVVPVQSLYPGAKYGGDGGILLLTSFAREYFPAVRFVTNDLIEGFAQENVGGRTVYTYQRCLGRFAGEFKHGEKINLSDISDALANNLPYHKYDLADHEGGLVIRIAAKSIPTEVIEAIKHDLLARNPDIAQMISSGLVGDIRIQCVDAQEITGNVSKRRY</sequence>
<protein>
    <recommendedName>
        <fullName evidence="3">Fumarate--(S)-2,3-diaminopropanoate ligase</fullName>
        <ecNumber evidence="1">6.3.2.46</ecNumber>
    </recommendedName>
    <alternativeName>
        <fullName evidence="2">ATP-dependent fumaroyl-DAP ligase</fullName>
    </alternativeName>
</protein>
<keyword id="KW-0045">Antibiotic biosynthesis</keyword>
<keyword id="KW-0436">Ligase</keyword>
<organism>
    <name type="scientific">Enterobacter agglomerans</name>
    <name type="common">Erwinia herbicola</name>
    <name type="synonym">Pantoea agglomerans</name>
    <dbReference type="NCBI Taxonomy" id="549"/>
    <lineage>
        <taxon>Bacteria</taxon>
        <taxon>Pseudomonadati</taxon>
        <taxon>Pseudomonadota</taxon>
        <taxon>Gammaproteobacteria</taxon>
        <taxon>Enterobacterales</taxon>
        <taxon>Erwiniaceae</taxon>
        <taxon>Pantoea</taxon>
        <taxon>Pantoea agglomerans group</taxon>
    </lineage>
</organism>